<dbReference type="EMBL" id="M32097">
    <property type="protein sequence ID" value="AAA98427.1"/>
    <property type="molecule type" value="Genomic_DNA"/>
</dbReference>
<dbReference type="SMR" id="P21212"/>
<dbReference type="Gene3D" id="3.40.50.12240">
    <property type="match status" value="1"/>
</dbReference>
<dbReference type="InterPro" id="IPR027417">
    <property type="entry name" value="P-loop_NTPase"/>
</dbReference>
<dbReference type="SUPFAM" id="SSF52540">
    <property type="entry name" value="P-loop containing nucleoside triphosphate hydrolases"/>
    <property type="match status" value="1"/>
</dbReference>
<proteinExistence type="evidence at transcript level"/>
<reference key="1">
    <citation type="journal article" date="1990" name="J. Bacteriol.">
        <title>The lcrE gene is part of an operon in the lcr region of Yersinia enterocolitica O:3.</title>
        <authorList>
            <person name="Viitanen A.-M."/>
            <person name="Toivanen P."/>
            <person name="Skurnik M."/>
        </authorList>
    </citation>
    <scope>NUCLEOTIDE SEQUENCE [GENOMIC DNA]</scope>
    <source>
        <strain>Serotype O:3</strain>
    </source>
</reference>
<protein>
    <recommendedName>
        <fullName>Uncharacterized protein in lcrE 5'region</fullName>
    </recommendedName>
    <alternativeName>
        <fullName>ORF7</fullName>
    </alternativeName>
</protein>
<comment type="induction">
    <text>Temperature seems to play the major role in regulation of transcription of the lcrE-containing operon of pYV, whereas Ca(2+) concentration has only a moderate effect at 37 degrees Celsius, and no effect at room temperature.</text>
</comment>
<name>YLC7_YEREN</name>
<geneLocation type="plasmid">
    <name>pYV</name>
</geneLocation>
<organism>
    <name type="scientific">Yersinia enterocolitica</name>
    <dbReference type="NCBI Taxonomy" id="630"/>
    <lineage>
        <taxon>Bacteria</taxon>
        <taxon>Pseudomonadati</taxon>
        <taxon>Pseudomonadota</taxon>
        <taxon>Gammaproteobacteria</taxon>
        <taxon>Enterobacterales</taxon>
        <taxon>Yersiniaceae</taxon>
        <taxon>Yersinia</taxon>
    </lineage>
</organism>
<accession>P21212</accession>
<sequence>MHQVGVGEHLLGQVLDGLGQPFDGGHLPEPAAWYPVYQDAPAPMSRKLITTPLSLGIL</sequence>
<feature type="chain" id="PRO_0000203508" description="Uncharacterized protein in lcrE 5'region">
    <location>
        <begin position="1"/>
        <end position="58" status="greater than"/>
    </location>
</feature>
<feature type="non-terminal residue">
    <location>
        <position position="58"/>
    </location>
</feature>
<keyword id="KW-0614">Plasmid</keyword>